<keyword id="KW-1015">Disulfide bond</keyword>
<keyword id="KW-0479">Metal-binding</keyword>
<keyword id="KW-0481">Metalloenzyme inhibitor</keyword>
<keyword id="KW-0483">Metalloprotease inhibitor</keyword>
<keyword id="KW-0646">Protease inhibitor</keyword>
<keyword id="KW-1185">Reference proteome</keyword>
<keyword id="KW-0964">Secreted</keyword>
<keyword id="KW-0732">Signal</keyword>
<keyword id="KW-0862">Zinc</keyword>
<comment type="function">
    <text evidence="1">Complexes with metalloproteinases (such as collagenases) and irreversibly inactivates them by binding to their catalytic zinc cofactor.</text>
</comment>
<comment type="subcellular location">
    <subcellularLocation>
        <location>Secreted</location>
    </subcellularLocation>
</comment>
<comment type="similarity">
    <text evidence="5">Belongs to the protease inhibitor I35 (TIMP) family.</text>
</comment>
<sequence>MPQSPRPVPSWALLLRLLALLRPPGLGEACSCAPAHPQQHVCHSALAIRAKISSEKVVPASTDPADPQKMIRYEIKQIKMFKGFEKVNDIQYIYTPFDSSLCGVKLEANSQKRYLLTGQILSDGKVFVHLCNYIEPWENLSFLQRESLNHHYHLNCGCQITTCYAVPCTISAPNECLWTDWLLERKLYGYQAQHYVCMKHVDGSCSWYQGRLPLRKEFVDIIQP</sequence>
<name>TIMP4_BOVIN</name>
<proteinExistence type="evidence at transcript level"/>
<dbReference type="EMBL" id="BC112857">
    <property type="protein sequence ID" value="AAI12858.1"/>
    <property type="molecule type" value="mRNA"/>
</dbReference>
<dbReference type="EMBL" id="AF037273">
    <property type="protein sequence ID" value="AAD02097.1"/>
    <property type="molecule type" value="mRNA"/>
</dbReference>
<dbReference type="RefSeq" id="NP_001039336.1">
    <property type="nucleotide sequence ID" value="NM_001045871.2"/>
</dbReference>
<dbReference type="SMR" id="O97563"/>
<dbReference type="FunCoup" id="O97563">
    <property type="interactions" value="34"/>
</dbReference>
<dbReference type="STRING" id="9913.ENSBTAP00000026999"/>
<dbReference type="MEROPS" id="I35.004"/>
<dbReference type="PaxDb" id="9913-ENSBTAP00000026999"/>
<dbReference type="GeneID" id="317694"/>
<dbReference type="KEGG" id="bta:317694"/>
<dbReference type="CTD" id="7079"/>
<dbReference type="eggNOG" id="KOG4745">
    <property type="taxonomic scope" value="Eukaryota"/>
</dbReference>
<dbReference type="InParanoid" id="O97563"/>
<dbReference type="OrthoDB" id="6041373at2759"/>
<dbReference type="Proteomes" id="UP000009136">
    <property type="component" value="Unplaced"/>
</dbReference>
<dbReference type="GO" id="GO:0031012">
    <property type="term" value="C:extracellular matrix"/>
    <property type="evidence" value="ECO:0000318"/>
    <property type="project" value="GO_Central"/>
</dbReference>
<dbReference type="GO" id="GO:0005615">
    <property type="term" value="C:extracellular space"/>
    <property type="evidence" value="ECO:0000318"/>
    <property type="project" value="GO_Central"/>
</dbReference>
<dbReference type="GO" id="GO:0046872">
    <property type="term" value="F:metal ion binding"/>
    <property type="evidence" value="ECO:0007669"/>
    <property type="project" value="UniProtKB-KW"/>
</dbReference>
<dbReference type="GO" id="GO:0008191">
    <property type="term" value="F:metalloendopeptidase inhibitor activity"/>
    <property type="evidence" value="ECO:0000318"/>
    <property type="project" value="GO_Central"/>
</dbReference>
<dbReference type="GO" id="GO:0051045">
    <property type="term" value="P:negative regulation of membrane protein ectodomain proteolysis"/>
    <property type="evidence" value="ECO:0000318"/>
    <property type="project" value="GO_Central"/>
</dbReference>
<dbReference type="GO" id="GO:0034097">
    <property type="term" value="P:response to cytokine"/>
    <property type="evidence" value="ECO:0000318"/>
    <property type="project" value="GO_Central"/>
</dbReference>
<dbReference type="GO" id="GO:0009725">
    <property type="term" value="P:response to hormone"/>
    <property type="evidence" value="ECO:0000318"/>
    <property type="project" value="GO_Central"/>
</dbReference>
<dbReference type="CDD" id="cd03585">
    <property type="entry name" value="NTR_TIMP"/>
    <property type="match status" value="1"/>
</dbReference>
<dbReference type="FunFam" id="3.90.370.10:FF:000001">
    <property type="entry name" value="Metalloproteinase inhibitor 3"/>
    <property type="match status" value="1"/>
</dbReference>
<dbReference type="FunFam" id="2.40.50.120:FF:000012">
    <property type="entry name" value="Metalloproteinase inhibitor 4"/>
    <property type="match status" value="1"/>
</dbReference>
<dbReference type="Gene3D" id="2.40.50.120">
    <property type="match status" value="1"/>
</dbReference>
<dbReference type="Gene3D" id="3.90.370.10">
    <property type="entry name" value="Tissue inhibitor of metalloproteinase-1. Chain B, domain 1"/>
    <property type="match status" value="1"/>
</dbReference>
<dbReference type="InterPro" id="IPR001134">
    <property type="entry name" value="Netrin_domain"/>
</dbReference>
<dbReference type="InterPro" id="IPR001820">
    <property type="entry name" value="TIMP"/>
</dbReference>
<dbReference type="InterPro" id="IPR008993">
    <property type="entry name" value="TIMP-like_OB-fold"/>
</dbReference>
<dbReference type="InterPro" id="IPR027465">
    <property type="entry name" value="TIMP_C"/>
</dbReference>
<dbReference type="InterPro" id="IPR030490">
    <property type="entry name" value="TIMP_CS"/>
</dbReference>
<dbReference type="PANTHER" id="PTHR11844">
    <property type="entry name" value="METALLOPROTEASE INHIBITOR"/>
    <property type="match status" value="1"/>
</dbReference>
<dbReference type="PANTHER" id="PTHR11844:SF26">
    <property type="entry name" value="METALLOPROTEINASE INHIBITOR 4"/>
    <property type="match status" value="1"/>
</dbReference>
<dbReference type="Pfam" id="PF00965">
    <property type="entry name" value="TIMP"/>
    <property type="match status" value="1"/>
</dbReference>
<dbReference type="SMART" id="SM00206">
    <property type="entry name" value="NTR"/>
    <property type="match status" value="1"/>
</dbReference>
<dbReference type="SUPFAM" id="SSF50242">
    <property type="entry name" value="TIMP-like"/>
    <property type="match status" value="1"/>
</dbReference>
<dbReference type="PROSITE" id="PS50189">
    <property type="entry name" value="NTR"/>
    <property type="match status" value="1"/>
</dbReference>
<dbReference type="PROSITE" id="PS00288">
    <property type="entry name" value="TIMP"/>
    <property type="match status" value="1"/>
</dbReference>
<gene>
    <name type="primary">TIMP4</name>
</gene>
<evidence type="ECO:0000250" key="1"/>
<evidence type="ECO:0000250" key="2">
    <source>
        <dbReference type="UniProtKB" id="P16035"/>
    </source>
</evidence>
<evidence type="ECO:0000255" key="3"/>
<evidence type="ECO:0000255" key="4">
    <source>
        <dbReference type="PROSITE-ProRule" id="PRU00295"/>
    </source>
</evidence>
<evidence type="ECO:0000305" key="5"/>
<organism>
    <name type="scientific">Bos taurus</name>
    <name type="common">Bovine</name>
    <dbReference type="NCBI Taxonomy" id="9913"/>
    <lineage>
        <taxon>Eukaryota</taxon>
        <taxon>Metazoa</taxon>
        <taxon>Chordata</taxon>
        <taxon>Craniata</taxon>
        <taxon>Vertebrata</taxon>
        <taxon>Euteleostomi</taxon>
        <taxon>Mammalia</taxon>
        <taxon>Eutheria</taxon>
        <taxon>Laurasiatheria</taxon>
        <taxon>Artiodactyla</taxon>
        <taxon>Ruminantia</taxon>
        <taxon>Pecora</taxon>
        <taxon>Bovidae</taxon>
        <taxon>Bovinae</taxon>
        <taxon>Bos</taxon>
    </lineage>
</organism>
<feature type="signal peptide" evidence="3">
    <location>
        <begin position="1"/>
        <end position="29"/>
    </location>
</feature>
<feature type="chain" id="PRO_0000220986" description="Metalloproteinase inhibitor 4">
    <location>
        <begin position="30"/>
        <end position="224"/>
    </location>
</feature>
<feature type="domain" description="NTR" evidence="4">
    <location>
        <begin position="30"/>
        <end position="156"/>
    </location>
</feature>
<feature type="region of interest" description="Involved in metalloproteinase-binding" evidence="2">
    <location>
        <begin position="30"/>
        <end position="33"/>
    </location>
</feature>
<feature type="region of interest" description="Involved in metalloproteinase-binding" evidence="2">
    <location>
        <begin position="99"/>
        <end position="100"/>
    </location>
</feature>
<feature type="binding site" evidence="2">
    <location>
        <position position="30"/>
    </location>
    <ligand>
        <name>Zn(2+)</name>
        <dbReference type="ChEBI" id="CHEBI:29105"/>
        <note>ligand shared with metalloproteinase partner</note>
    </ligand>
</feature>
<feature type="site" description="Involved in metalloproteinase-binding" evidence="2">
    <location>
        <position position="69"/>
    </location>
</feature>
<feature type="disulfide bond" evidence="4">
    <location>
        <begin position="30"/>
        <end position="102"/>
    </location>
</feature>
<feature type="disulfide bond" evidence="4">
    <location>
        <begin position="32"/>
        <end position="131"/>
    </location>
</feature>
<feature type="disulfide bond" evidence="4">
    <location>
        <begin position="42"/>
        <end position="156"/>
    </location>
</feature>
<feature type="disulfide bond" evidence="4">
    <location>
        <begin position="158"/>
        <end position="205"/>
    </location>
</feature>
<feature type="disulfide bond" evidence="4">
    <location>
        <begin position="163"/>
        <end position="168"/>
    </location>
</feature>
<feature type="disulfide bond" evidence="4">
    <location>
        <begin position="176"/>
        <end position="197"/>
    </location>
</feature>
<feature type="sequence conflict" description="In Ref. 2; AAD02097." evidence="5" ref="2">
    <original>R</original>
    <variation>Q</variation>
    <location>
        <position position="113"/>
    </location>
</feature>
<feature type="sequence conflict" description="In Ref. 2; AAD02097." evidence="5" ref="2">
    <original>H</original>
    <variation>R</variation>
    <location>
        <position position="151"/>
    </location>
</feature>
<protein>
    <recommendedName>
        <fullName>Metalloproteinase inhibitor 4</fullName>
    </recommendedName>
    <alternativeName>
        <fullName>Tissue inhibitor of metalloproteinases 4</fullName>
        <shortName>TIMP-4</shortName>
    </alternativeName>
</protein>
<reference key="1">
    <citation type="submission" date="2006-01" db="EMBL/GenBank/DDBJ databases">
        <authorList>
            <consortium name="NIH - Mammalian Gene Collection (MGC) project"/>
        </authorList>
    </citation>
    <scope>NUCLEOTIDE SEQUENCE [LARGE SCALE MRNA]</scope>
    <source>
        <strain>Hereford</strain>
        <tissue>Hypothalamus</tissue>
    </source>
</reference>
<reference key="2">
    <citation type="submission" date="1997-12" db="EMBL/GenBank/DDBJ databases">
        <authorList>
            <person name="Hosseini G.H."/>
            <person name="Pepper M.S."/>
        </authorList>
    </citation>
    <scope>NUCLEOTIDE SEQUENCE [MRNA] OF 71-177</scope>
    <source>
        <tissue>Adrenal cortex</tissue>
    </source>
</reference>
<accession>O97563</accession>
<accession>Q2KHW6</accession>